<gene>
    <name evidence="1" type="primary">rpsU</name>
    <name type="ordered locus">HNE_3162</name>
</gene>
<protein>
    <recommendedName>
        <fullName evidence="1">Small ribosomal subunit protein bS21</fullName>
    </recommendedName>
    <alternativeName>
        <fullName evidence="2">30S ribosomal protein S21</fullName>
    </alternativeName>
</protein>
<comment type="similarity">
    <text evidence="1">Belongs to the bacterial ribosomal protein bS21 family.</text>
</comment>
<sequence>MVQIVVRDNNVEQALRALKKKMQREGLFREMKARQHFEKPSEKKARQRAEAVRRARKLARKRAQREGIV</sequence>
<feature type="chain" id="PRO_0000266691" description="Small ribosomal subunit protein bS21">
    <location>
        <begin position="1"/>
        <end position="69"/>
    </location>
</feature>
<accession>Q0BXF6</accession>
<keyword id="KW-1185">Reference proteome</keyword>
<keyword id="KW-0687">Ribonucleoprotein</keyword>
<keyword id="KW-0689">Ribosomal protein</keyword>
<dbReference type="EMBL" id="CP000158">
    <property type="protein sequence ID" value="ABI77986.1"/>
    <property type="molecule type" value="Genomic_DNA"/>
</dbReference>
<dbReference type="SMR" id="Q0BXF6"/>
<dbReference type="STRING" id="228405.HNE_3162"/>
<dbReference type="KEGG" id="hne:HNE_3162"/>
<dbReference type="eggNOG" id="COG0828">
    <property type="taxonomic scope" value="Bacteria"/>
</dbReference>
<dbReference type="HOGENOM" id="CLU_159258_0_1_5"/>
<dbReference type="Proteomes" id="UP000001959">
    <property type="component" value="Chromosome"/>
</dbReference>
<dbReference type="GO" id="GO:1990904">
    <property type="term" value="C:ribonucleoprotein complex"/>
    <property type="evidence" value="ECO:0007669"/>
    <property type="project" value="UniProtKB-KW"/>
</dbReference>
<dbReference type="GO" id="GO:0005840">
    <property type="term" value="C:ribosome"/>
    <property type="evidence" value="ECO:0007669"/>
    <property type="project" value="UniProtKB-KW"/>
</dbReference>
<dbReference type="GO" id="GO:0003735">
    <property type="term" value="F:structural constituent of ribosome"/>
    <property type="evidence" value="ECO:0007669"/>
    <property type="project" value="InterPro"/>
</dbReference>
<dbReference type="GO" id="GO:0006412">
    <property type="term" value="P:translation"/>
    <property type="evidence" value="ECO:0007669"/>
    <property type="project" value="UniProtKB-UniRule"/>
</dbReference>
<dbReference type="Gene3D" id="1.20.5.1150">
    <property type="entry name" value="Ribosomal protein S8"/>
    <property type="match status" value="1"/>
</dbReference>
<dbReference type="HAMAP" id="MF_00358">
    <property type="entry name" value="Ribosomal_bS21"/>
    <property type="match status" value="1"/>
</dbReference>
<dbReference type="InterPro" id="IPR001911">
    <property type="entry name" value="Ribosomal_bS21"/>
</dbReference>
<dbReference type="InterPro" id="IPR018278">
    <property type="entry name" value="Ribosomal_bS21_CS"/>
</dbReference>
<dbReference type="InterPro" id="IPR038380">
    <property type="entry name" value="Ribosomal_bS21_sf"/>
</dbReference>
<dbReference type="NCBIfam" id="TIGR00030">
    <property type="entry name" value="S21p"/>
    <property type="match status" value="1"/>
</dbReference>
<dbReference type="PANTHER" id="PTHR21109">
    <property type="entry name" value="MITOCHONDRIAL 28S RIBOSOMAL PROTEIN S21"/>
    <property type="match status" value="1"/>
</dbReference>
<dbReference type="PANTHER" id="PTHR21109:SF0">
    <property type="entry name" value="SMALL RIBOSOMAL SUBUNIT PROTEIN BS21M"/>
    <property type="match status" value="1"/>
</dbReference>
<dbReference type="Pfam" id="PF01165">
    <property type="entry name" value="Ribosomal_S21"/>
    <property type="match status" value="1"/>
</dbReference>
<dbReference type="PRINTS" id="PR00976">
    <property type="entry name" value="RIBOSOMALS21"/>
</dbReference>
<dbReference type="PROSITE" id="PS01181">
    <property type="entry name" value="RIBOSOMAL_S21"/>
    <property type="match status" value="1"/>
</dbReference>
<evidence type="ECO:0000255" key="1">
    <source>
        <dbReference type="HAMAP-Rule" id="MF_00358"/>
    </source>
</evidence>
<evidence type="ECO:0000305" key="2"/>
<name>RS21_HYPNA</name>
<organism>
    <name type="scientific">Hyphomonas neptunium (strain ATCC 15444)</name>
    <dbReference type="NCBI Taxonomy" id="228405"/>
    <lineage>
        <taxon>Bacteria</taxon>
        <taxon>Pseudomonadati</taxon>
        <taxon>Pseudomonadota</taxon>
        <taxon>Alphaproteobacteria</taxon>
        <taxon>Hyphomonadales</taxon>
        <taxon>Hyphomonadaceae</taxon>
        <taxon>Hyphomonas</taxon>
    </lineage>
</organism>
<proteinExistence type="inferred from homology"/>
<reference key="1">
    <citation type="journal article" date="2006" name="J. Bacteriol.">
        <title>Comparative genomic evidence for a close relationship between the dimorphic prosthecate bacteria Hyphomonas neptunium and Caulobacter crescentus.</title>
        <authorList>
            <person name="Badger J.H."/>
            <person name="Hoover T.R."/>
            <person name="Brun Y.V."/>
            <person name="Weiner R.M."/>
            <person name="Laub M.T."/>
            <person name="Alexandre G."/>
            <person name="Mrazek J."/>
            <person name="Ren Q."/>
            <person name="Paulsen I.T."/>
            <person name="Nelson K.E."/>
            <person name="Khouri H.M."/>
            <person name="Radune D."/>
            <person name="Sosa J."/>
            <person name="Dodson R.J."/>
            <person name="Sullivan S.A."/>
            <person name="Rosovitz M.J."/>
            <person name="Madupu R."/>
            <person name="Brinkac L.M."/>
            <person name="Durkin A.S."/>
            <person name="Daugherty S.C."/>
            <person name="Kothari S.P."/>
            <person name="Giglio M.G."/>
            <person name="Zhou L."/>
            <person name="Haft D.H."/>
            <person name="Selengut J.D."/>
            <person name="Davidsen T.M."/>
            <person name="Yang Q."/>
            <person name="Zafar N."/>
            <person name="Ward N.L."/>
        </authorList>
    </citation>
    <scope>NUCLEOTIDE SEQUENCE [LARGE SCALE GENOMIC DNA]</scope>
    <source>
        <strain>ATCC 15444</strain>
    </source>
</reference>